<gene>
    <name evidence="11" type="primary">CYP71D179</name>
</gene>
<accession>P0DO36</accession>
<comment type="function">
    <text evidence="11">Involved in the biosynthesis of phenolic monoterpenes natural products thymol and carvacrol which have a broad range of biological activities acting as antimicrobial compounds, insecticides, antioxidants and pharmaceutical agents (Ref.1). Catalyzes probably the C3-hydroxylation of gamma-terpinene to produce thymol (Ref.1).</text>
</comment>
<comment type="cofactor">
    <cofactor evidence="1">
        <name>heme</name>
        <dbReference type="ChEBI" id="CHEBI:30413"/>
    </cofactor>
</comment>
<comment type="pathway">
    <text evidence="11">Secondary metabolite biosynthesis; terpenoid biosynthesis.</text>
</comment>
<comment type="subcellular location">
    <subcellularLocation>
        <location evidence="2">Membrane</location>
        <topology evidence="12">Single-pass type II membrane protein</topology>
    </subcellularLocation>
</comment>
<comment type="biotechnology">
    <text evidence="4 5 8 10">The monoterpenic phenol thymol is widely used as a fragrance and a flavoring ingredient in food and cosmetic industries (PubMed:29785774). Its derivatives have also several biological and pharmacological properties such as antimicrobial, antioxidant, anticarcinogenesis, anti-inflammatory and antispasmodic activities (PubMed:29785774, PubMed:29874939). Medical applications include the treatment of disorders affecting the respiratory, nervous, and cardiovascular systems (PubMed:29785774). It may also act as a growth enhancer and immunomodulator (PubMed:29785774). Thymol may also have antiviral activity toward COVID-19 by binding to the S1 receptor binding domain of the SARS-CoV-2 spike (S) glycoprotein (PubMed:32834111, PubMed:33855010).</text>
</comment>
<comment type="biotechnology">
    <text evidence="3 5 6 7 8 9 10">The monoterpenic phenol carvacrol is commonly used as a fragrance and a food flavoring ingredient and preservative (PubMed:24915411). Its derivatives exhibit also various biological and pharmacological properties including antioxidant, antibacterial, antifungal, insecticid, nematicid, anticancer, anti-inflammatory, hepatoprotective, spasmolytic, and vasorelaxant (PubMed:24915411, PubMed:29874939, PubMed:30836858, PubMed:33664752). Phytochemical inhibitor targeting the main SARS-CoV-2 viral protease (Mpro) and ACE2 in human host cells, carvacrol is a possible candidate for treating COVID-19 (PubMed:32448034, PubMed:33664752). Carvacrol may also have antiviral activity toward COVID-19 by binding to the S1 receptor binding domain of the SARS-CoV-2 spike (S) glycoprotein (PubMed:32834111, PubMed:33855010).</text>
</comment>
<comment type="similarity">
    <text evidence="12">Belongs to the cytochrome P450 family.</text>
</comment>
<sequence length="496" mass="56304">MDISISWVVIIVSVLSYLILMDKWRAAKLPKNIPPGPPKLPLIGHLHLLRGGLPQHLLRGITQKYGPVAHVQLGELFSVVLSSTEAARQAMKVLDPNFADRFVNIGSRIMWYDSEDIIFSRYNDHWRQIRKICVSELLSPKNVRSFGYIRQDEMASLIRLFESSEGKPVNVSEEISKTVCTIVSRVAFGSAVKDQSLLLNLVKESLRMASGFELADLFPSSWLLNLLCFNKYRLWRMRARLDNFLDGFLEEHRVKKSGEFGGEDIIDVLYRMQKDSQMKVPITNNGIKGFIYDVFSAGTDTSAATILWALSELMRYPEKMAKAQAEVRESLKGKTNVDLTEVHELKYLRSVVKEALRLHPPFPMIPRLCVQESEVTGYTIPANTRILINVWSIGRDPLYWEDPDTFNPDRYDEVPRDIIGNDFELIPFGSGRRICPGLHFGLANIEVPLAQLLYHFDWKLPPGMTAADIDMTEKTGLSGPRKNPLILVPIIHNPTS</sequence>
<name>CP179_THYVU</name>
<protein>
    <recommendedName>
        <fullName evidence="11">Cytochrome P450 71D179</fullName>
    </recommendedName>
    <alternativeName>
        <fullName evidence="13">Gamma-terpinene hydroxylase</fullName>
    </alternativeName>
    <alternativeName>
        <fullName evidence="13">Thymol synthase</fullName>
        <ecNumber evidence="11">1.14.14.-</ecNumber>
    </alternativeName>
</protein>
<proteinExistence type="evidence at protein level"/>
<organism>
    <name type="scientific">Thymus vulgaris</name>
    <name type="common">Thyme</name>
    <dbReference type="NCBI Taxonomy" id="49992"/>
    <lineage>
        <taxon>Eukaryota</taxon>
        <taxon>Viridiplantae</taxon>
        <taxon>Streptophyta</taxon>
        <taxon>Embryophyta</taxon>
        <taxon>Tracheophyta</taxon>
        <taxon>Spermatophyta</taxon>
        <taxon>Magnoliopsida</taxon>
        <taxon>eudicotyledons</taxon>
        <taxon>Gunneridae</taxon>
        <taxon>Pentapetalae</taxon>
        <taxon>asterids</taxon>
        <taxon>lamiids</taxon>
        <taxon>Lamiales</taxon>
        <taxon>Lamiaceae</taxon>
        <taxon>Nepetoideae</taxon>
        <taxon>Mentheae</taxon>
        <taxon>Thymus</taxon>
    </lineage>
</organism>
<keyword id="KW-0349">Heme</keyword>
<keyword id="KW-0408">Iron</keyword>
<keyword id="KW-0472">Membrane</keyword>
<keyword id="KW-0479">Metal-binding</keyword>
<keyword id="KW-0503">Monooxygenase</keyword>
<keyword id="KW-0560">Oxidoreductase</keyword>
<keyword id="KW-0735">Signal-anchor</keyword>
<keyword id="KW-0812">Transmembrane</keyword>
<keyword id="KW-1133">Transmembrane helix</keyword>
<feature type="chain" id="PRO_0000453323" description="Cytochrome P450 71D179">
    <location>
        <begin position="1"/>
        <end position="496"/>
    </location>
</feature>
<feature type="transmembrane region" description="Helical; Signal-anchor for type II membrane protein" evidence="2">
    <location>
        <begin position="1"/>
        <end position="21"/>
    </location>
</feature>
<feature type="binding site" description="axial binding residue" evidence="1">
    <location>
        <position position="435"/>
    </location>
    <ligand>
        <name>heme</name>
        <dbReference type="ChEBI" id="CHEBI:30413"/>
    </ligand>
    <ligandPart>
        <name>Fe</name>
        <dbReference type="ChEBI" id="CHEBI:18248"/>
    </ligandPart>
</feature>
<feature type="sequence variant" description="In strain: cv. Tc." evidence="13">
    <original>K</original>
    <variation>E</variation>
    <location>
        <position position="167"/>
    </location>
</feature>
<feature type="sequence variant" description="In strain: cv. Tc." evidence="13">
    <original>I</original>
    <variation>V</variation>
    <location>
        <position position="175"/>
    </location>
</feature>
<dbReference type="EC" id="1.14.14.-" evidence="11"/>
<dbReference type="SMR" id="P0DO36"/>
<dbReference type="UniPathway" id="UPA00213"/>
<dbReference type="GO" id="GO:0016020">
    <property type="term" value="C:membrane"/>
    <property type="evidence" value="ECO:0007669"/>
    <property type="project" value="UniProtKB-SubCell"/>
</dbReference>
<dbReference type="GO" id="GO:0020037">
    <property type="term" value="F:heme binding"/>
    <property type="evidence" value="ECO:0007669"/>
    <property type="project" value="InterPro"/>
</dbReference>
<dbReference type="GO" id="GO:0005506">
    <property type="term" value="F:iron ion binding"/>
    <property type="evidence" value="ECO:0007669"/>
    <property type="project" value="InterPro"/>
</dbReference>
<dbReference type="GO" id="GO:0004497">
    <property type="term" value="F:monooxygenase activity"/>
    <property type="evidence" value="ECO:0007669"/>
    <property type="project" value="UniProtKB-KW"/>
</dbReference>
<dbReference type="GO" id="GO:0016705">
    <property type="term" value="F:oxidoreductase activity, acting on paired donors, with incorporation or reduction of molecular oxygen"/>
    <property type="evidence" value="ECO:0007669"/>
    <property type="project" value="InterPro"/>
</dbReference>
<dbReference type="GO" id="GO:0016114">
    <property type="term" value="P:terpenoid biosynthetic process"/>
    <property type="evidence" value="ECO:0007669"/>
    <property type="project" value="UniProtKB-UniPathway"/>
</dbReference>
<dbReference type="CDD" id="cd11072">
    <property type="entry name" value="CYP71-like"/>
    <property type="match status" value="1"/>
</dbReference>
<dbReference type="FunFam" id="1.10.630.10:FF:000043">
    <property type="entry name" value="Cytochrome P450 99A2"/>
    <property type="match status" value="1"/>
</dbReference>
<dbReference type="Gene3D" id="1.10.630.10">
    <property type="entry name" value="Cytochrome P450"/>
    <property type="match status" value="1"/>
</dbReference>
<dbReference type="InterPro" id="IPR052306">
    <property type="entry name" value="CYP450_71D"/>
</dbReference>
<dbReference type="InterPro" id="IPR001128">
    <property type="entry name" value="Cyt_P450"/>
</dbReference>
<dbReference type="InterPro" id="IPR017972">
    <property type="entry name" value="Cyt_P450_CS"/>
</dbReference>
<dbReference type="InterPro" id="IPR002401">
    <property type="entry name" value="Cyt_P450_E_grp-I"/>
</dbReference>
<dbReference type="InterPro" id="IPR036396">
    <property type="entry name" value="Cyt_P450_sf"/>
</dbReference>
<dbReference type="PANTHER" id="PTHR47953:SF19">
    <property type="entry name" value="OS06G0641600 PROTEIN"/>
    <property type="match status" value="1"/>
</dbReference>
<dbReference type="PANTHER" id="PTHR47953">
    <property type="entry name" value="OS08G0105600 PROTEIN"/>
    <property type="match status" value="1"/>
</dbReference>
<dbReference type="Pfam" id="PF00067">
    <property type="entry name" value="p450"/>
    <property type="match status" value="1"/>
</dbReference>
<dbReference type="PRINTS" id="PR00463">
    <property type="entry name" value="EP450I"/>
</dbReference>
<dbReference type="PRINTS" id="PR00385">
    <property type="entry name" value="P450"/>
</dbReference>
<dbReference type="SUPFAM" id="SSF48264">
    <property type="entry name" value="Cytochrome P450"/>
    <property type="match status" value="1"/>
</dbReference>
<dbReference type="PROSITE" id="PS00086">
    <property type="entry name" value="CYTOCHROME_P450"/>
    <property type="match status" value="1"/>
</dbReference>
<evidence type="ECO:0000250" key="1">
    <source>
        <dbReference type="UniProtKB" id="Q96242"/>
    </source>
</evidence>
<evidence type="ECO:0000255" key="2"/>
<evidence type="ECO:0000303" key="3">
    <source>
    </source>
</evidence>
<evidence type="ECO:0000303" key="4">
    <source>
    </source>
</evidence>
<evidence type="ECO:0000303" key="5">
    <source>
    </source>
</evidence>
<evidence type="ECO:0000303" key="6">
    <source>
    </source>
</evidence>
<evidence type="ECO:0000303" key="7">
    <source>
    </source>
</evidence>
<evidence type="ECO:0000303" key="8">
    <source>
    </source>
</evidence>
<evidence type="ECO:0000303" key="9">
    <source>
    </source>
</evidence>
<evidence type="ECO:0000303" key="10">
    <source>
    </source>
</evidence>
<evidence type="ECO:0000303" key="11">
    <source ref="1"/>
</evidence>
<evidence type="ECO:0000305" key="12"/>
<evidence type="ECO:0000305" key="13">
    <source ref="1"/>
</evidence>
<reference key="1">
    <citation type="thesis" date="2011" institute="Friedrich Schiller University of Jena" country="Germany">
        <title>Biosynthesis of the phenolic monoterpenes, thymol and carvacrol, by terpene synthases and cytochrome P450s in oregano and thyme.</title>
        <authorList>
            <person name="Crocoll C."/>
        </authorList>
    </citation>
    <scope>NUCLEOTIDE SEQUENCE [MRNA]</scope>
    <scope>FUNCTION</scope>
    <scope>CATALYTIC ACTIVITY</scope>
    <scope>PATHWAY</scope>
    <source>
        <strain>cv. L48</strain>
        <strain>cv. Tc</strain>
        <tissue>Leaf</tissue>
        <tissue>Trichome gland</tissue>
    </source>
</reference>
<reference key="2">
    <citation type="journal article" date="2015" name="Crit. Rev. Food Sci. Nutr.">
        <title>The bioactivity and toxicological actions of carvacrol.</title>
        <authorList>
            <person name="Suntres Z.E."/>
            <person name="Coccimiglio J."/>
            <person name="Alipour M."/>
        </authorList>
    </citation>
    <scope>REVIEW ON CARVACROL</scope>
    <scope>BIOTECHNOLOGY</scope>
</reference>
<reference key="3">
    <citation type="journal article" date="2018" name="Phytother. Res.">
        <title>Thymol, thyme, and other plant sources: Health and potential uses.</title>
        <authorList>
            <person name="Salehi B."/>
            <person name="Mishra A.P."/>
            <person name="Shukla I."/>
            <person name="Sharifi-Rad M."/>
            <person name="Contreras M.D.M."/>
            <person name="Segura-Carretero A."/>
            <person name="Fathi H."/>
            <person name="Nasrabadi N.N."/>
            <person name="Kobarfard F."/>
            <person name="Sharifi-Rad J."/>
        </authorList>
    </citation>
    <scope>REVIEW ON THYMOL</scope>
    <scope>BIOTECHNOLOGY</scope>
</reference>
<reference key="4">
    <citation type="journal article" date="2019" name="Nat. Prod. Res.">
        <title>Synthesis and antifungal activity of carvacrol and thymol esters with heteroaromatic carboxylic acids.</title>
        <authorList>
            <person name="Wang K."/>
            <person name="Jiang S."/>
            <person name="Yang Y."/>
            <person name="Fan L."/>
            <person name="Su F."/>
            <person name="Ye M."/>
        </authorList>
    </citation>
    <scope>REVIEW ON CARVACROL AND THYMOL</scope>
    <scope>BIOTECHNOLOGY</scope>
</reference>
<reference key="5">
    <citation type="journal article" date="2020" name="Front. Plant Sci.">
        <title>Carvacrol, a plant metabolite targeting viral protease (Mpro) and ACE2 in host cells can be a possible candidate for COVID-19.</title>
        <authorList>
            <person name="Javed H."/>
            <person name="Meeran M.F.N."/>
            <person name="Jha N.K."/>
            <person name="Ojha S."/>
        </authorList>
    </citation>
    <scope>REVIEW ON CARVACROL EFFECTS ON COVID-19</scope>
    <scope>BIOTECHNOLOGY</scope>
</reference>
<reference key="6">
    <citation type="journal article" date="2020" name="J. Biomol. Struct. Dyn.">
        <title>Identification of phytochemical inhibitors against main protease of COVID-19 using molecular modeling approaches.</title>
        <authorList>
            <person name="Kumar A."/>
            <person name="Choudhir G."/>
            <person name="Shukla S.K."/>
            <person name="Sharma M."/>
            <person name="Tyagi P."/>
            <person name="Bhushan A."/>
            <person name="Rathore M."/>
        </authorList>
    </citation>
    <scope>REVIEW ON CARVACROL EFFECTS ON COVID-19</scope>
    <scope>BIOTECHNOLOGY</scope>
</reference>
<reference key="7">
    <citation type="journal article" date="2020" name="J. Biomol. Struct. Dyn.">
        <title>Synthesis, anticholinesterase activity and molecular modeling studies of novel carvacrol-substituted amide derivatives.</title>
        <authorList>
            <person name="Zengin Kurt B."/>
            <person name="Durdagi S."/>
            <person name="Celebi G."/>
            <person name="Ekhteiari Salmas R."/>
            <person name="Sonmez F."/>
        </authorList>
    </citation>
    <scope>REVIEW ON CARVACROL DERIVATIVES</scope>
    <scope>BIOTECHNOLOGY</scope>
</reference>
<reference key="8">
    <citation type="journal article" date="2020" name="J. Mol. Struct.">
        <title>Computational evaluation of major components from plant essential oils as potent inhibitors of SARS-CoV-2 spike protein.</title>
        <authorList>
            <person name="Kulkarni S.A."/>
            <person name="Nagarajan S.K."/>
            <person name="Ramesh V."/>
            <person name="Palaniyandi V."/>
            <person name="Selvam S.P."/>
            <person name="Madhavan T."/>
        </authorList>
    </citation>
    <scope>REVIEW ON PLANT ESSENTIAL OILS EFFECTS ON COVID-19</scope>
    <scope>BIOTECHNOLOGY</scope>
</reference>
<reference key="9">
    <citation type="journal article" date="2021" name="Front. Chem.">
        <title>Antiviral essential oil components against SARS-CoV-2 in pre-procedural mouth rinses for dental settings during COVID-19: A computational study.</title>
        <authorList>
            <person name="Yadalam P.K."/>
            <person name="Varatharajan K."/>
            <person name="Rajapandian K."/>
            <person name="Chopra P."/>
            <person name="Arumuganainar D."/>
            <person name="Nagarathnam T."/>
            <person name="Sohn H."/>
            <person name="Madhavan T."/>
        </authorList>
    </citation>
    <scope>REVIEW ON PLANT ESSENTIAL OILS EFFECTS ON COVID-19</scope>
    <scope>BIOTECHNOLOGY</scope>
</reference>